<proteinExistence type="evidence at protein level"/>
<evidence type="ECO:0000269" key="1">
    <source>
    </source>
</evidence>
<evidence type="ECO:0000269" key="2">
    <source>
    </source>
</evidence>
<evidence type="ECO:0000269" key="3">
    <source>
    </source>
</evidence>
<evidence type="ECO:0000269" key="4">
    <source>
    </source>
</evidence>
<evidence type="ECO:0000269" key="5">
    <source>
    </source>
</evidence>
<evidence type="ECO:0000269" key="6">
    <source>
    </source>
</evidence>
<evidence type="ECO:0000269" key="7">
    <source>
    </source>
</evidence>
<evidence type="ECO:0000269" key="8">
    <source>
    </source>
</evidence>
<evidence type="ECO:0000269" key="9">
    <source>
    </source>
</evidence>
<evidence type="ECO:0000303" key="10">
    <source>
    </source>
</evidence>
<evidence type="ECO:0000303" key="11">
    <source>
    </source>
</evidence>
<evidence type="ECO:0000305" key="12"/>
<evidence type="ECO:0000312" key="13">
    <source>
        <dbReference type="HGNC" id="HGNC:26048"/>
    </source>
</evidence>
<evidence type="ECO:0007744" key="14">
    <source>
        <dbReference type="PDB" id="7CUN"/>
    </source>
</evidence>
<evidence type="ECO:0007744" key="15">
    <source>
        <dbReference type="PDB" id="7PKS"/>
    </source>
</evidence>
<evidence type="ECO:0007744" key="16">
    <source>
        <dbReference type="PDB" id="7YCX"/>
    </source>
</evidence>
<evidence type="ECO:0007744" key="17">
    <source>
        <dbReference type="PDB" id="8RBX"/>
    </source>
</evidence>
<evidence type="ECO:0007744" key="18">
    <source>
        <dbReference type="PDB" id="8RBZ"/>
    </source>
</evidence>
<evidence type="ECO:0007744" key="19">
    <source>
        <dbReference type="PDB" id="8RC4"/>
    </source>
</evidence>
<evidence type="ECO:0007744" key="20">
    <source>
        <dbReference type="PDB" id="9EOF"/>
    </source>
</evidence>
<evidence type="ECO:0007744" key="21">
    <source>
        <dbReference type="PDB" id="9EP4"/>
    </source>
</evidence>
<evidence type="ECO:0007744" key="22">
    <source>
    </source>
</evidence>
<evidence type="ECO:0007829" key="23">
    <source>
        <dbReference type="PDB" id="7CUN"/>
    </source>
</evidence>
<evidence type="ECO:0007829" key="24">
    <source>
        <dbReference type="PDB" id="8RC4"/>
    </source>
</evidence>
<organism>
    <name type="scientific">Homo sapiens</name>
    <name type="common">Human</name>
    <dbReference type="NCBI Taxonomy" id="9606"/>
    <lineage>
        <taxon>Eukaryota</taxon>
        <taxon>Metazoa</taxon>
        <taxon>Chordata</taxon>
        <taxon>Craniata</taxon>
        <taxon>Vertebrata</taxon>
        <taxon>Euteleostomi</taxon>
        <taxon>Mammalia</taxon>
        <taxon>Eutheria</taxon>
        <taxon>Euarchontoglires</taxon>
        <taxon>Primates</taxon>
        <taxon>Haplorrhini</taxon>
        <taxon>Catarrhini</taxon>
        <taxon>Hominidae</taxon>
        <taxon>Homo</taxon>
    </lineage>
</organism>
<protein>
    <recommendedName>
        <fullName evidence="12">Integrator complex subunit 8</fullName>
        <shortName>Int8</shortName>
    </recommendedName>
    <alternativeName>
        <fullName>Protein kaonashi-1</fullName>
    </alternativeName>
</protein>
<keyword id="KW-0002">3D-structure</keyword>
<keyword id="KW-0025">Alternative splicing</keyword>
<keyword id="KW-0158">Chromosome</keyword>
<keyword id="KW-0225">Disease variant</keyword>
<keyword id="KW-0991">Intellectual disability</keyword>
<keyword id="KW-0539">Nucleus</keyword>
<keyword id="KW-0597">Phosphoprotein</keyword>
<keyword id="KW-1267">Proteomics identification</keyword>
<keyword id="KW-1185">Reference proteome</keyword>
<keyword id="KW-0677">Repeat</keyword>
<keyword id="KW-0802">TPR repeat</keyword>
<reference key="1">
    <citation type="submission" date="2004-02" db="EMBL/GenBank/DDBJ databases">
        <title>Novel gene with no significant domain.</title>
        <authorList>
            <person name="Atsushi S."/>
            <person name="Asakawa S."/>
            <person name="Shimizu N."/>
        </authorList>
    </citation>
    <scope>NUCLEOTIDE SEQUENCE [MRNA] (ISOFORM 1)</scope>
    <source>
        <tissue>Brain</tissue>
    </source>
</reference>
<reference key="2">
    <citation type="submission" date="2005-07" db="EMBL/GenBank/DDBJ databases">
        <authorList>
            <person name="Mural R.J."/>
            <person name="Istrail S."/>
            <person name="Sutton G.G."/>
            <person name="Florea L."/>
            <person name="Halpern A.L."/>
            <person name="Mobarry C.M."/>
            <person name="Lippert R."/>
            <person name="Walenz B."/>
            <person name="Shatkay H."/>
            <person name="Dew I."/>
            <person name="Miller J.R."/>
            <person name="Flanigan M.J."/>
            <person name="Edwards N.J."/>
            <person name="Bolanos R."/>
            <person name="Fasulo D."/>
            <person name="Halldorsson B.V."/>
            <person name="Hannenhalli S."/>
            <person name="Turner R."/>
            <person name="Yooseph S."/>
            <person name="Lu F."/>
            <person name="Nusskern D.R."/>
            <person name="Shue B.C."/>
            <person name="Zheng X.H."/>
            <person name="Zhong F."/>
            <person name="Delcher A.L."/>
            <person name="Huson D.H."/>
            <person name="Kravitz S.A."/>
            <person name="Mouchard L."/>
            <person name="Reinert K."/>
            <person name="Remington K.A."/>
            <person name="Clark A.G."/>
            <person name="Waterman M.S."/>
            <person name="Eichler E.E."/>
            <person name="Adams M.D."/>
            <person name="Hunkapiller M.W."/>
            <person name="Myers E.W."/>
            <person name="Venter J.C."/>
        </authorList>
    </citation>
    <scope>NUCLEOTIDE SEQUENCE [LARGE SCALE GENOMIC DNA]</scope>
</reference>
<reference key="3">
    <citation type="journal article" date="2004" name="Genome Res.">
        <title>The status, quality, and expansion of the NIH full-length cDNA project: the Mammalian Gene Collection (MGC).</title>
        <authorList>
            <consortium name="The MGC Project Team"/>
        </authorList>
    </citation>
    <scope>NUCLEOTIDE SEQUENCE [LARGE SCALE MRNA] (ISOFORM 1)</scope>
    <source>
        <tissue>Brain</tissue>
        <tissue>Testis</tissue>
        <tissue>Uterus</tissue>
    </source>
</reference>
<reference key="4">
    <citation type="journal article" date="2007" name="BMC Genomics">
        <title>The full-ORF clone resource of the German cDNA consortium.</title>
        <authorList>
            <person name="Bechtel S."/>
            <person name="Rosenfelder H."/>
            <person name="Duda A."/>
            <person name="Schmidt C.P."/>
            <person name="Ernst U."/>
            <person name="Wellenreuther R."/>
            <person name="Mehrle A."/>
            <person name="Schuster C."/>
            <person name="Bahr A."/>
            <person name="Bloecker H."/>
            <person name="Heubner D."/>
            <person name="Hoerlein A."/>
            <person name="Michel G."/>
            <person name="Wedler H."/>
            <person name="Koehrer K."/>
            <person name="Ottenwaelder B."/>
            <person name="Poustka A."/>
            <person name="Wiemann S."/>
            <person name="Schupp I."/>
        </authorList>
    </citation>
    <scope>NUCLEOTIDE SEQUENCE [LARGE SCALE MRNA] OF 180-995 (ISOFORM 2)</scope>
    <source>
        <tissue>Rectum tumor</tissue>
    </source>
</reference>
<reference key="5">
    <citation type="journal article" date="2004" name="Nat. Genet.">
        <title>Complete sequencing and characterization of 21,243 full-length human cDNAs.</title>
        <authorList>
            <person name="Ota T."/>
            <person name="Suzuki Y."/>
            <person name="Nishikawa T."/>
            <person name="Otsuki T."/>
            <person name="Sugiyama T."/>
            <person name="Irie R."/>
            <person name="Wakamatsu A."/>
            <person name="Hayashi K."/>
            <person name="Sato H."/>
            <person name="Nagai K."/>
            <person name="Kimura K."/>
            <person name="Makita H."/>
            <person name="Sekine M."/>
            <person name="Obayashi M."/>
            <person name="Nishi T."/>
            <person name="Shibahara T."/>
            <person name="Tanaka T."/>
            <person name="Ishii S."/>
            <person name="Yamamoto J."/>
            <person name="Saito K."/>
            <person name="Kawai Y."/>
            <person name="Isono Y."/>
            <person name="Nakamura Y."/>
            <person name="Nagahari K."/>
            <person name="Murakami K."/>
            <person name="Yasuda T."/>
            <person name="Iwayanagi T."/>
            <person name="Wagatsuma M."/>
            <person name="Shiratori A."/>
            <person name="Sudo H."/>
            <person name="Hosoiri T."/>
            <person name="Kaku Y."/>
            <person name="Kodaira H."/>
            <person name="Kondo H."/>
            <person name="Sugawara M."/>
            <person name="Takahashi M."/>
            <person name="Kanda K."/>
            <person name="Yokoi T."/>
            <person name="Furuya T."/>
            <person name="Kikkawa E."/>
            <person name="Omura Y."/>
            <person name="Abe K."/>
            <person name="Kamihara K."/>
            <person name="Katsuta N."/>
            <person name="Sato K."/>
            <person name="Tanikawa M."/>
            <person name="Yamazaki M."/>
            <person name="Ninomiya K."/>
            <person name="Ishibashi T."/>
            <person name="Yamashita H."/>
            <person name="Murakawa K."/>
            <person name="Fujimori K."/>
            <person name="Tanai H."/>
            <person name="Kimata M."/>
            <person name="Watanabe M."/>
            <person name="Hiraoka S."/>
            <person name="Chiba Y."/>
            <person name="Ishida S."/>
            <person name="Ono Y."/>
            <person name="Takiguchi S."/>
            <person name="Watanabe S."/>
            <person name="Yosida M."/>
            <person name="Hotuta T."/>
            <person name="Kusano J."/>
            <person name="Kanehori K."/>
            <person name="Takahashi-Fujii A."/>
            <person name="Hara H."/>
            <person name="Tanase T.-O."/>
            <person name="Nomura Y."/>
            <person name="Togiya S."/>
            <person name="Komai F."/>
            <person name="Hara R."/>
            <person name="Takeuchi K."/>
            <person name="Arita M."/>
            <person name="Imose N."/>
            <person name="Musashino K."/>
            <person name="Yuuki H."/>
            <person name="Oshima A."/>
            <person name="Sasaki N."/>
            <person name="Aotsuka S."/>
            <person name="Yoshikawa Y."/>
            <person name="Matsunawa H."/>
            <person name="Ichihara T."/>
            <person name="Shiohata N."/>
            <person name="Sano S."/>
            <person name="Moriya S."/>
            <person name="Momiyama H."/>
            <person name="Satoh N."/>
            <person name="Takami S."/>
            <person name="Terashima Y."/>
            <person name="Suzuki O."/>
            <person name="Nakagawa S."/>
            <person name="Senoh A."/>
            <person name="Mizoguchi H."/>
            <person name="Goto Y."/>
            <person name="Shimizu F."/>
            <person name="Wakebe H."/>
            <person name="Hishigaki H."/>
            <person name="Watanabe T."/>
            <person name="Sugiyama A."/>
            <person name="Takemoto M."/>
            <person name="Kawakami B."/>
            <person name="Yamazaki M."/>
            <person name="Watanabe K."/>
            <person name="Kumagai A."/>
            <person name="Itakura S."/>
            <person name="Fukuzumi Y."/>
            <person name="Fujimori Y."/>
            <person name="Komiyama M."/>
            <person name="Tashiro H."/>
            <person name="Tanigami A."/>
            <person name="Fujiwara T."/>
            <person name="Ono T."/>
            <person name="Yamada K."/>
            <person name="Fujii Y."/>
            <person name="Ozaki K."/>
            <person name="Hirao M."/>
            <person name="Ohmori Y."/>
            <person name="Kawabata A."/>
            <person name="Hikiji T."/>
            <person name="Kobatake N."/>
            <person name="Inagaki H."/>
            <person name="Ikema Y."/>
            <person name="Okamoto S."/>
            <person name="Okitani R."/>
            <person name="Kawakami T."/>
            <person name="Noguchi S."/>
            <person name="Itoh T."/>
            <person name="Shigeta K."/>
            <person name="Senba T."/>
            <person name="Matsumura K."/>
            <person name="Nakajima Y."/>
            <person name="Mizuno T."/>
            <person name="Morinaga M."/>
            <person name="Sasaki M."/>
            <person name="Togashi T."/>
            <person name="Oyama M."/>
            <person name="Hata H."/>
            <person name="Watanabe M."/>
            <person name="Komatsu T."/>
            <person name="Mizushima-Sugano J."/>
            <person name="Satoh T."/>
            <person name="Shirai Y."/>
            <person name="Takahashi Y."/>
            <person name="Nakagawa K."/>
            <person name="Okumura K."/>
            <person name="Nagase T."/>
            <person name="Nomura N."/>
            <person name="Kikuchi H."/>
            <person name="Masuho Y."/>
            <person name="Yamashita R."/>
            <person name="Nakai K."/>
            <person name="Yada T."/>
            <person name="Nakamura Y."/>
            <person name="Ohara O."/>
            <person name="Isogai T."/>
            <person name="Sugano S."/>
        </authorList>
    </citation>
    <scope>NUCLEOTIDE SEQUENCE [LARGE SCALE MRNA] OF 307-995 (ISOFORM 1)</scope>
    <source>
        <tissue>Carcinoma</tissue>
        <tissue>Teratocarcinoma</tissue>
    </source>
</reference>
<reference key="6">
    <citation type="journal article" date="2005" name="Cell">
        <title>Integrator, a multiprotein mediator of small nuclear RNA processing, associates with the C-terminal repeat of RNA polymerase II.</title>
        <authorList>
            <person name="Baillat D."/>
            <person name="Hakimi M.-A."/>
            <person name="Naeaer A.M."/>
            <person name="Shilatifard A."/>
            <person name="Cooch N."/>
            <person name="Shiekhattar R."/>
        </authorList>
    </citation>
    <scope>FUNCTION</scope>
    <scope>IDENTIFICATION BY MASS SPECTROMETRY</scope>
    <scope>IDENTIFICATION IN THE INTEGRATOR COMPLEX</scope>
</reference>
<reference key="7">
    <citation type="journal article" date="2006" name="Cell">
        <title>Global, in vivo, and site-specific phosphorylation dynamics in signaling networks.</title>
        <authorList>
            <person name="Olsen J.V."/>
            <person name="Blagoev B."/>
            <person name="Gnad F."/>
            <person name="Macek B."/>
            <person name="Kumar C."/>
            <person name="Mortensen P."/>
            <person name="Mann M."/>
        </authorList>
    </citation>
    <scope>PHOSPHORYLATION [LARGE SCALE ANALYSIS] AT THR-18</scope>
    <scope>IDENTIFICATION BY MASS SPECTROMETRY [LARGE SCALE ANALYSIS]</scope>
    <source>
        <tissue>Cervix carcinoma</tissue>
    </source>
</reference>
<reference key="8">
    <citation type="journal article" date="2020" name="Mol. Cell">
        <title>Integrator recruits protein phosphatase 2A to prevent pause release and facilitate transcription termination.</title>
        <authorList>
            <person name="Huang K.L."/>
            <person name="Jee D."/>
            <person name="Stein C.B."/>
            <person name="Elrod N.D."/>
            <person name="Henriques T."/>
            <person name="Mascibroda L.G."/>
            <person name="Baillat D."/>
            <person name="Russell W.K."/>
            <person name="Adelman K."/>
            <person name="Wagner E.J."/>
        </authorList>
    </citation>
    <scope>FUNCTION</scope>
    <scope>DOMAIN</scope>
    <scope>MUTAGENESIS OF 24-TRP--PHE-27</scope>
</reference>
<reference key="9">
    <citation type="journal article" date="2021" name="Cell">
        <title>The PP2A-Integrator-CDK9 axis fine-tunes transcription and can be targeted therapeutically in cancer.</title>
        <authorList>
            <person name="Vervoort S.J."/>
            <person name="Welsh S.A."/>
            <person name="Devlin J.R."/>
            <person name="Barbieri E."/>
            <person name="Knight D.A."/>
            <person name="Offley S."/>
            <person name="Bjelosevic S."/>
            <person name="Costacurta M."/>
            <person name="Todorovski I."/>
            <person name="Kearney C.J."/>
            <person name="Sandow J.J."/>
            <person name="Fan Z."/>
            <person name="Blyth B."/>
            <person name="McLeod V."/>
            <person name="Vissers J.H.A."/>
            <person name="Pavic K."/>
            <person name="Martin B.P."/>
            <person name="Gregory G."/>
            <person name="Demosthenous E."/>
            <person name="Zethoven M."/>
            <person name="Kong I.Y."/>
            <person name="Hawkins E.D."/>
            <person name="Hogg S.J."/>
            <person name="Kelly M.J."/>
            <person name="Newbold A."/>
            <person name="Simpson K.J."/>
            <person name="Kauko O."/>
            <person name="Harvey K.F."/>
            <person name="Ohlmeyer M."/>
            <person name="Westermarck J."/>
            <person name="Gray N."/>
            <person name="Gardini A."/>
            <person name="Johnstone R.W."/>
        </authorList>
    </citation>
    <scope>FUNCTION</scope>
    <scope>IDENTIFICATION IN THE INTAC COMPLEX</scope>
    <scope>SUBCELLULAR LOCATION</scope>
</reference>
<reference key="10">
    <citation type="journal article" date="2023" name="Mol. Cell">
        <title>INTAC endonuclease and phosphatase modules differentially regulate transcription by RNA polymerase II.</title>
        <authorList>
            <person name="Hu S."/>
            <person name="Peng L."/>
            <person name="Song A."/>
            <person name="Ji Y.X."/>
            <person name="Cheng J."/>
            <person name="Wang M."/>
            <person name="Chen F.X."/>
        </authorList>
    </citation>
    <scope>FUNCTION</scope>
    <scope>IDENTIFICATION IN THE INTAC COMPLEX</scope>
</reference>
<reference key="11">
    <citation type="journal article" date="2024" name="Mol. Cell">
        <title>Cytoplasmic binding partners of the Integrator endonuclease INTS11 and its paralog CPSF73 are required for their nuclear function.</title>
        <authorList>
            <person name="Lin M.H."/>
            <person name="Jensen M.K."/>
            <person name="Elrod N.D."/>
            <person name="Chu H.F."/>
            <person name="Haseley M."/>
            <person name="Beam A.C."/>
            <person name="Huang K.L."/>
            <person name="Chiang W."/>
            <person name="Russell W.K."/>
            <person name="Williams K."/>
            <person name="Proschel C."/>
            <person name="Wagner E.J."/>
            <person name="Tong L."/>
        </authorList>
    </citation>
    <scope>IDENTIFICATION IN THE INTEGRATOR COMPLEX</scope>
    <scope>SUBCELLULAR LOCATION</scope>
</reference>
<reference evidence="14" key="12">
    <citation type="journal article" date="2020" name="Science">
        <title>Identification of Integrator-PP2A complex (INTAC), an RNA polymerase II phosphatase.</title>
        <authorList>
            <person name="Zheng H."/>
            <person name="Qi Y."/>
            <person name="Hu S."/>
            <person name="Cao X."/>
            <person name="Xu C."/>
            <person name="Yin Z."/>
            <person name="Chen X."/>
            <person name="Li Y."/>
            <person name="Liu W."/>
            <person name="Li J."/>
            <person name="Wang J."/>
            <person name="Wei G."/>
            <person name="Liang K."/>
            <person name="Chen F.X."/>
            <person name="Xu Y."/>
        </authorList>
    </citation>
    <scope>STRUCTURE BY ELECTRON MICROSCOPY (3.50 ANGSTROMS) OF INTAC COMPLEX</scope>
    <scope>FUNCTION</scope>
    <scope>IDENTIFICATION IN THE INTAC COMPLEX</scope>
</reference>
<reference evidence="15" key="13">
    <citation type="journal article" date="2021" name="Science">
        <title>Structural basis of Integrator-mediated transcription regulation.</title>
        <authorList>
            <person name="Fianu I."/>
            <person name="Chen Y."/>
            <person name="Dienemann C."/>
            <person name="Dybkov O."/>
            <person name="Linden A."/>
            <person name="Urlaub H."/>
            <person name="Cramer P."/>
        </authorList>
    </citation>
    <scope>STRUCTURE BY ELECTRON MICROSCOPY (3.60 ANGSTROMS) OF INTEGRATOR COMPLEX</scope>
    <scope>IDENTIFICATION IN THE INTEGRATOR COMPLEX</scope>
</reference>
<reference evidence="16" key="14">
    <citation type="journal article" date="2023" name="Protein Cell">
        <title>Structural basis of INTAC-regulated transcription.</title>
        <authorList>
            <person name="Zheng H."/>
            <person name="Jin Q."/>
            <person name="Wang X."/>
            <person name="Qi Y."/>
            <person name="Liu W."/>
            <person name="Ren Y."/>
            <person name="Zhao D."/>
            <person name="Xavier Chen F."/>
            <person name="Cheng J."/>
            <person name="Chen X."/>
            <person name="Xu Y."/>
        </authorList>
    </citation>
    <scope>STRUCTURE BY ELECTRON MICROSCOPY (4.18 ANGSTROMS) OF INTAC COMPLEX</scope>
</reference>
<reference evidence="20 21" key="15">
    <citation type="journal article" date="2024" name="Mol. Cell">
        <title>Structural basis of the Integrator complex assembly and association with transcription factors.</title>
        <authorList>
            <person name="Razew M."/>
            <person name="Fraudeau A."/>
            <person name="Pfleiderer M.M."/>
            <person name="Linares R."/>
            <person name="Galej W.P."/>
        </authorList>
    </citation>
    <scope>STRUCTURE BY ELECTRON MICROSCOPY (3.20 ANGSTROMS) IN COMPLEX WITH INTS5; INTS10 AND INTS15</scope>
</reference>
<reference evidence="17 18 19" key="16">
    <citation type="journal article" date="2024" name="Nature">
        <title>Structural basis of Integrator-dependent RNA polymerase II termination.</title>
        <authorList>
            <person name="Fianu I."/>
            <person name="Ochmann M."/>
            <person name="Walshe J.L."/>
            <person name="Dybkov O."/>
            <person name="Cruz J.N."/>
            <person name="Urlaub H."/>
            <person name="Cramer P."/>
        </authorList>
    </citation>
    <scope>STRUCTURE BY ELECTRON MICROSCOPY (3.10 ANGSTROMS) OF INTAC COMPLEX</scope>
    <scope>FUNCTION</scope>
    <scope>IDENTIFICATION IN THE INTAC COMPLEX</scope>
</reference>
<reference key="17">
    <citation type="journal article" date="2017" name="PLoS Genet.">
        <title>Human mutations in integrator complex subunits link transcriptome integrity to brain development.</title>
        <authorList>
            <person name="Oegema R."/>
            <person name="Baillat D."/>
            <person name="Schot R."/>
            <person name="van Unen L.M."/>
            <person name="Brooks A."/>
            <person name="Kia S.K."/>
            <person name="Hoogeboom A.J.M."/>
            <person name="Xia Z."/>
            <person name="Li W."/>
            <person name="Cesaroni M."/>
            <person name="Lequin M.H."/>
            <person name="van Slegtenhorst M."/>
            <person name="Dobyns W.B."/>
            <person name="de Coo I.F.M."/>
            <person name="Verheijen F.W."/>
            <person name="Kremer A."/>
            <person name="van der Spek P.J."/>
            <person name="Heijsman D."/>
            <person name="Wagner E.J."/>
            <person name="Fornerod M."/>
            <person name="Mancini G.M.S."/>
        </authorList>
    </citation>
    <scope>VARIANTS NEDCHS GLY-298 AND 973-GLU--LEU-975 DEL</scope>
    <scope>CHARACTERIZATION OF VARIANTS NEDCHS GLY-298 AND 973-GLU--LEU-975 DEL</scope>
    <scope>DEVELOPMENTAL STAGE</scope>
    <scope>FUNCTION</scope>
</reference>
<name>INT8_HUMAN</name>
<feature type="chain" id="PRO_0000259553" description="Integrator complex subunit 8">
    <location>
        <begin position="1"/>
        <end position="995"/>
    </location>
</feature>
<feature type="repeat" description="TPR 1">
    <location>
        <begin position="250"/>
        <end position="288"/>
    </location>
</feature>
<feature type="repeat" description="TPR 2">
    <location>
        <begin position="320"/>
        <end position="356"/>
    </location>
</feature>
<feature type="repeat" description="TPR 3">
    <location>
        <begin position="570"/>
        <end position="603"/>
    </location>
</feature>
<feature type="repeat" description="TPR 4">
    <location>
        <begin position="833"/>
        <end position="866"/>
    </location>
</feature>
<feature type="short sequence motif" description="WFEF motif" evidence="3">
    <location>
        <begin position="24"/>
        <end position="29"/>
    </location>
</feature>
<feature type="modified residue" description="Phosphothreonine" evidence="22">
    <location>
        <position position="18"/>
    </location>
</feature>
<feature type="splice variant" id="VSP_021469" description="In isoform 2." evidence="10">
    <location>
        <begin position="879"/>
        <end position="895"/>
    </location>
</feature>
<feature type="sequence variant" id="VAR_083358" description="In NEDCHS; occurs in a splice site resulting in altered splicing and probable nonsense-mediated mRNA decay; dbSNP:rs1586479593." evidence="2">
    <original>D</original>
    <variation>G</variation>
    <location>
        <position position="298"/>
    </location>
</feature>
<feature type="sequence variant" id="VAR_083359" description="In NEDCHS; alters the assembly of the Integrator complex." evidence="2">
    <location>
        <begin position="973"/>
        <end position="975"/>
    </location>
</feature>
<feature type="mutagenesis site" description="Abolished recruitment of protein phosphatase 2A subunits." evidence="3">
    <original>WFEF</original>
    <variation>AAAA</variation>
    <location>
        <begin position="24"/>
        <end position="27"/>
    </location>
</feature>
<feature type="sequence conflict" description="In Ref. 5; BAA91238." evidence="12" ref="5">
    <original>V</original>
    <variation>A</variation>
    <location>
        <position position="778"/>
    </location>
</feature>
<feature type="sequence conflict" description="In Ref. 4; CAD98067." evidence="12" ref="4">
    <original>N</original>
    <variation>S</variation>
    <location>
        <position position="832"/>
    </location>
</feature>
<feature type="helix" evidence="24">
    <location>
        <begin position="25"/>
        <end position="29"/>
    </location>
</feature>
<feature type="helix" evidence="24">
    <location>
        <begin position="33"/>
        <end position="38"/>
    </location>
</feature>
<feature type="strand" evidence="24">
    <location>
        <begin position="40"/>
        <end position="42"/>
    </location>
</feature>
<feature type="helix" evidence="24">
    <location>
        <begin position="47"/>
        <end position="59"/>
    </location>
</feature>
<feature type="helix" evidence="23">
    <location>
        <begin position="61"/>
        <end position="69"/>
    </location>
</feature>
<feature type="helix" evidence="24">
    <location>
        <begin position="76"/>
        <end position="91"/>
    </location>
</feature>
<feature type="turn" evidence="24">
    <location>
        <begin position="92"/>
        <end position="94"/>
    </location>
</feature>
<feature type="helix" evidence="24">
    <location>
        <begin position="96"/>
        <end position="102"/>
    </location>
</feature>
<feature type="helix" evidence="24">
    <location>
        <begin position="105"/>
        <end position="118"/>
    </location>
</feature>
<feature type="turn" evidence="24">
    <location>
        <begin position="127"/>
        <end position="129"/>
    </location>
</feature>
<feature type="turn" evidence="24">
    <location>
        <begin position="132"/>
        <end position="134"/>
    </location>
</feature>
<feature type="helix" evidence="24">
    <location>
        <begin position="137"/>
        <end position="158"/>
    </location>
</feature>
<feature type="helix" evidence="24">
    <location>
        <begin position="171"/>
        <end position="193"/>
    </location>
</feature>
<feature type="helix" evidence="24">
    <location>
        <begin position="195"/>
        <end position="205"/>
    </location>
</feature>
<feature type="strand" evidence="24">
    <location>
        <begin position="212"/>
        <end position="214"/>
    </location>
</feature>
<feature type="helix" evidence="24">
    <location>
        <begin position="217"/>
        <end position="224"/>
    </location>
</feature>
<feature type="turn" evidence="23">
    <location>
        <begin position="235"/>
        <end position="237"/>
    </location>
</feature>
<feature type="strand" evidence="24">
    <location>
        <begin position="240"/>
        <end position="243"/>
    </location>
</feature>
<feature type="helix" evidence="24">
    <location>
        <begin position="245"/>
        <end position="264"/>
    </location>
</feature>
<feature type="helix" evidence="24">
    <location>
        <begin position="268"/>
        <end position="270"/>
    </location>
</feature>
<feature type="helix" evidence="24">
    <location>
        <begin position="271"/>
        <end position="288"/>
    </location>
</feature>
<feature type="helix" evidence="24">
    <location>
        <begin position="299"/>
        <end position="312"/>
    </location>
</feature>
<feature type="turn" evidence="24">
    <location>
        <begin position="316"/>
        <end position="320"/>
    </location>
</feature>
<feature type="helix" evidence="24">
    <location>
        <begin position="325"/>
        <end position="335"/>
    </location>
</feature>
<feature type="helix" evidence="24">
    <location>
        <begin position="338"/>
        <end position="351"/>
    </location>
</feature>
<feature type="helix" evidence="24">
    <location>
        <begin position="356"/>
        <end position="372"/>
    </location>
</feature>
<feature type="helix" evidence="24">
    <location>
        <begin position="377"/>
        <end position="394"/>
    </location>
</feature>
<feature type="helix" evidence="24">
    <location>
        <begin position="401"/>
        <end position="406"/>
    </location>
</feature>
<feature type="helix" evidence="24">
    <location>
        <begin position="412"/>
        <end position="426"/>
    </location>
</feature>
<feature type="turn" evidence="24">
    <location>
        <begin position="428"/>
        <end position="430"/>
    </location>
</feature>
<feature type="helix" evidence="24">
    <location>
        <begin position="433"/>
        <end position="448"/>
    </location>
</feature>
<feature type="strand" evidence="24">
    <location>
        <begin position="451"/>
        <end position="453"/>
    </location>
</feature>
<feature type="helix" evidence="24">
    <location>
        <begin position="454"/>
        <end position="460"/>
    </location>
</feature>
<feature type="helix" evidence="24">
    <location>
        <begin position="463"/>
        <end position="468"/>
    </location>
</feature>
<feature type="helix" evidence="24">
    <location>
        <begin position="471"/>
        <end position="484"/>
    </location>
</feature>
<feature type="helix" evidence="24">
    <location>
        <begin position="505"/>
        <end position="518"/>
    </location>
</feature>
<feature type="helix" evidence="24">
    <location>
        <begin position="522"/>
        <end position="535"/>
    </location>
</feature>
<feature type="strand" evidence="24">
    <location>
        <begin position="536"/>
        <end position="538"/>
    </location>
</feature>
<feature type="helix" evidence="24">
    <location>
        <begin position="541"/>
        <end position="543"/>
    </location>
</feature>
<feature type="helix" evidence="24">
    <location>
        <begin position="552"/>
        <end position="559"/>
    </location>
</feature>
<feature type="helix" evidence="24">
    <location>
        <begin position="564"/>
        <end position="582"/>
    </location>
</feature>
<feature type="helix" evidence="24">
    <location>
        <begin position="586"/>
        <end position="600"/>
    </location>
</feature>
<feature type="turn" evidence="24">
    <location>
        <begin position="601"/>
        <end position="603"/>
    </location>
</feature>
<feature type="helix" evidence="24">
    <location>
        <begin position="605"/>
        <end position="625"/>
    </location>
</feature>
<feature type="turn" evidence="24">
    <location>
        <begin position="626"/>
        <end position="631"/>
    </location>
</feature>
<feature type="helix" evidence="24">
    <location>
        <begin position="636"/>
        <end position="647"/>
    </location>
</feature>
<feature type="strand" evidence="24">
    <location>
        <begin position="651"/>
        <end position="653"/>
    </location>
</feature>
<feature type="helix" evidence="24">
    <location>
        <begin position="657"/>
        <end position="669"/>
    </location>
</feature>
<feature type="helix" evidence="24">
    <location>
        <begin position="673"/>
        <end position="678"/>
    </location>
</feature>
<feature type="helix" evidence="24">
    <location>
        <begin position="682"/>
        <end position="687"/>
    </location>
</feature>
<feature type="helix" evidence="24">
    <location>
        <begin position="689"/>
        <end position="702"/>
    </location>
</feature>
<feature type="turn" evidence="24">
    <location>
        <begin position="703"/>
        <end position="705"/>
    </location>
</feature>
<feature type="helix" evidence="24">
    <location>
        <begin position="707"/>
        <end position="724"/>
    </location>
</feature>
<feature type="strand" evidence="23">
    <location>
        <begin position="736"/>
        <end position="738"/>
    </location>
</feature>
<feature type="turn" evidence="24">
    <location>
        <begin position="741"/>
        <end position="743"/>
    </location>
</feature>
<feature type="helix" evidence="24">
    <location>
        <begin position="745"/>
        <end position="747"/>
    </location>
</feature>
<feature type="strand" evidence="24">
    <location>
        <begin position="750"/>
        <end position="752"/>
    </location>
</feature>
<feature type="helix" evidence="24">
    <location>
        <begin position="754"/>
        <end position="761"/>
    </location>
</feature>
<feature type="helix" evidence="24">
    <location>
        <begin position="767"/>
        <end position="782"/>
    </location>
</feature>
<feature type="strand" evidence="23">
    <location>
        <begin position="786"/>
        <end position="788"/>
    </location>
</feature>
<feature type="strand" evidence="24">
    <location>
        <begin position="797"/>
        <end position="799"/>
    </location>
</feature>
<feature type="helix" evidence="24">
    <location>
        <begin position="806"/>
        <end position="808"/>
    </location>
</feature>
<feature type="helix" evidence="24">
    <location>
        <begin position="811"/>
        <end position="828"/>
    </location>
</feature>
<feature type="helix" evidence="24">
    <location>
        <begin position="833"/>
        <end position="845"/>
    </location>
</feature>
<feature type="helix" evidence="24">
    <location>
        <begin position="849"/>
        <end position="862"/>
    </location>
</feature>
<feature type="turn" evidence="24">
    <location>
        <begin position="863"/>
        <end position="868"/>
    </location>
</feature>
<feature type="turn" evidence="24">
    <location>
        <begin position="873"/>
        <end position="875"/>
    </location>
</feature>
<feature type="helix" evidence="24">
    <location>
        <begin position="878"/>
        <end position="890"/>
    </location>
</feature>
<feature type="helix" evidence="24">
    <location>
        <begin position="894"/>
        <end position="900"/>
    </location>
</feature>
<feature type="helix" evidence="24">
    <location>
        <begin position="901"/>
        <end position="903"/>
    </location>
</feature>
<feature type="strand" evidence="24">
    <location>
        <begin position="904"/>
        <end position="906"/>
    </location>
</feature>
<feature type="helix" evidence="24">
    <location>
        <begin position="909"/>
        <end position="916"/>
    </location>
</feature>
<feature type="helix" evidence="24">
    <location>
        <begin position="925"/>
        <end position="931"/>
    </location>
</feature>
<feature type="helix" evidence="24">
    <location>
        <begin position="935"/>
        <end position="947"/>
    </location>
</feature>
<feature type="helix" evidence="24">
    <location>
        <begin position="951"/>
        <end position="961"/>
    </location>
</feature>
<feature type="helix" evidence="24">
    <location>
        <begin position="964"/>
        <end position="966"/>
    </location>
</feature>
<feature type="helix" evidence="24">
    <location>
        <begin position="972"/>
        <end position="994"/>
    </location>
</feature>
<sequence length="995" mass="113088">MSAEAADREAATSSRPCTPPQTCWFEFLLEESLLEKHLRKPCPDPAPVQLIVQFLEQASKPSVNEQNQVQPPPDNKRNRILKLLALKVAAHLKWDLDILEKSLSVPVLNMLLNELLCISKVPPGTKHVDMDLATLPPTTAMAVLLYNRWAIRTIVQSSFPVKQAKPGPPQLSVMNQMQQEKELTENILKVLKEQAADSILVLEAALKLNKDLYVHTMRTLDLLAMEPGMVNGETESSTAGLKVKTEEMQCQVCYDLGAAYFQQGSTNSAVYENAREKFFRTKELIAEIGSLSLHCTIDEKRLAGYCQACDVLVPSSDSTSQQLTPYSQVHICLRSGNYQEVIQIFIEDNLTLSLPVQFRQSVLRELFKKAQQGNEALDEICFKVCACNTVRDILEGRTISVQFNQLFLRPNKEKIDFLLEVCSRSVNLEKASESLKGNMAAFLKNVCLGLEDLQYVFMISSHELFITLLKDEERKLLVDQMRKRSPRVNLCIKPVTSFYDIPASASVNIGQLEHQLILSVDPWRIRQILIELHGMTSERQFWTVSNKWEVPSVYSGVILGIKDNLTRDLVYILMAKGLHCSTVKDFSHAKQLFAACLELVTEFSPKLRQVMLNEMLLLDIHTHEAGTGQAGERPPSDLISRVRGYLEMRLPDIPLRQVIAEECVAFMLNWRENEYLTLQVPAFLLQSNPYVKLGQLLAATCKELPGPKESRRTAKDLWEVVVQICSVSSQHKRGNDGRVSLIKQRESTLGIMYRSELLSFIKKLREPLVLTIILSLFVKLHNVREDIVNDITAEHISIWPSSIPNLQSVDFEAVAITVKELVRYTLSINPNNHSWLIIQADIYFATNQYSAALHYYLQAGAVCSDFFNKAVPPDVYTDQVIKRMIKCCSLLNCHTQVAILCQFLREIDYKTAFKSLQEQNSHDAMDSYYDYIWDVTILEYLTYLHHKRGETDKRQIAIKAIGQTELNASNPEEVLQLAAQRRKKKFLQAMAKLYF</sequence>
<gene>
    <name evidence="11 13" type="primary">INTS8</name>
    <name evidence="13" type="synonym">C8orf52</name>
</gene>
<accession>Q75QN2</accession>
<accession>B2RN92</accession>
<accession>Q5RKZ3</accession>
<accession>Q6P1R5</accession>
<accession>Q7Z314</accession>
<accession>Q9NVS6</accession>
<accession>Q9NWY7</accession>
<comment type="function">
    <text evidence="1 2 3 4 5 7 8">Component of the integrator complex, a multiprotein complex that terminates RNA polymerase II (Pol II) transcription in the promoter-proximal region of genes (PubMed:28542170, PubMed:33243860, PubMed:34004147, PubMed:37080207, PubMed:38570683). The integrator complex provides a quality checkpoint during transcription elongation by driving premature transcription termination of transcripts that are unfavorably configured for transcriptional elongation: the complex terminates transcription by (1) catalyzing dephosphorylation of the C-terminal domain (CTD) of Pol II subunit POLR2A/RPB1 and SUPT5H/SPT5, (2) degrading the exiting nascent RNA transcript via endonuclease activity and (3) promoting the release of Pol II from bound DNA (PubMed:33243860, PubMed:34004147, PubMed:38570683). The integrator complex is also involved in terminating the synthesis of non-coding Pol II transcripts, such as enhancer RNAs (eRNAs), small nuclear RNAs (snRNAs), telomerase RNAs and long non-coding RNAs (lncRNAs) (PubMed:16239144). Within the integrator complex, INTS8 is required for the recruitment of protein phosphatase 2A (PP2A) to transcription pause-release checkpoint (PubMed:32966759, PubMed:33243860, PubMed:34004147, PubMed:37080207).</text>
</comment>
<comment type="subunit">
    <text evidence="1 4 5 6 7 8 9">Component of the Integrator complex, composed of core subunits INTS1, INTS2, INTS3, INTS4, INTS5, INTS6, INTS7, INTS8, INTS9/RC74, INTS10, INTS11/CPSF3L, INTS12, INTS13, INTS14 and INTS15 (PubMed:16239144, PubMed:33243860, PubMed:34004147, PubMed:34762484, PubMed:37080207, PubMed:38570683, PubMed:39032490). The core complex associates with protein phosphatase 2A subunits PPP2CA and PPP2R1A, to form the Integrator-PP2A (INTAC) complex (PubMed:33243860, PubMed:34004147, PubMed:34762484, PubMed:37080207, PubMed:38570683).</text>
</comment>
<comment type="interaction">
    <interactant intactId="EBI-2340089">
        <id>Q75QN2</id>
    </interactant>
    <interactant intactId="EBI-7600112">
        <id>Q6P9B9</id>
        <label>INTS5</label>
    </interactant>
    <organismsDiffer>false</organismsDiffer>
    <experiments>4</experiments>
</comment>
<comment type="subcellular location">
    <subcellularLocation>
        <location evidence="5 9">Nucleus</location>
    </subcellularLocation>
    <subcellularLocation>
        <location evidence="5">Chromosome</location>
    </subcellularLocation>
    <text evidence="5">Associates with chromatin and transcription pause-release checkpoint.</text>
</comment>
<comment type="alternative products">
    <event type="alternative splicing"/>
    <isoform>
        <id>Q75QN2-1</id>
        <name>1</name>
        <sequence type="displayed"/>
    </isoform>
    <isoform>
        <id>Q75QN2-2</id>
        <name>2</name>
        <sequence type="described" ref="VSP_021469"/>
    </isoform>
</comment>
<comment type="developmental stage">
    <text evidence="2">Highly expressed in the brain in the ventricular and subventricular zones, caudal and lateral ganglionic eminences and cerebellar primordium at 16-21 postconceptional week.</text>
</comment>
<comment type="domain">
    <text evidence="3">The WFEF motif is required for the recruitment of protein phosphatase 2A (PP2A) to transcription pause-release checkpoint.</text>
</comment>
<comment type="disease" evidence="2">
    <disease id="DI-05657">
        <name>Neurodevelopmental disorder with cerebellar hypoplasia and spasticity</name>
        <acronym>NEDCHS</acronym>
        <description>An autosomal recessive neurodevelopmental disorder characterized by global developmental delay, profound intellectual disability, seizures, absent speech, spasticity, facial and limb dysmorphism, and subtle structural brain abnormalities including cerebellar hypoplasia.</description>
        <dbReference type="MIM" id="618572"/>
    </disease>
    <text>The disease is caused by variants affecting the gene represented in this entry.</text>
</comment>
<comment type="similarity">
    <text evidence="12">Belongs to the Integrator subunit 8 family.</text>
</comment>
<comment type="sequence caution" evidence="12">
    <conflict type="frameshift">
        <sequence resource="EMBL-CDS" id="AAH50536"/>
    </conflict>
</comment>
<comment type="sequence caution" evidence="12">
    <conflict type="erroneous initiation">
        <sequence resource="EMBL-CDS" id="BAA91238"/>
    </conflict>
    <text>Truncated N-terminus.</text>
</comment>
<comment type="sequence caution" evidence="12">
    <conflict type="erroneous initiation">
        <sequence resource="EMBL-CDS" id="BAA91671"/>
    </conflict>
    <text>Truncated N-terminus.</text>
</comment>
<dbReference type="EMBL" id="AB161944">
    <property type="protein sequence ID" value="BAD10863.1"/>
    <property type="molecule type" value="mRNA"/>
</dbReference>
<dbReference type="EMBL" id="CH471060">
    <property type="protein sequence ID" value="EAW91726.1"/>
    <property type="molecule type" value="Genomic_DNA"/>
</dbReference>
<dbReference type="EMBL" id="BC050536">
    <property type="protein sequence ID" value="AAH50536.1"/>
    <property type="status" value="ALT_FRAME"/>
    <property type="molecule type" value="mRNA"/>
</dbReference>
<dbReference type="EMBL" id="BC064915">
    <property type="protein sequence ID" value="AAH64915.1"/>
    <property type="molecule type" value="mRNA"/>
</dbReference>
<dbReference type="EMBL" id="BC136754">
    <property type="protein sequence ID" value="AAI36755.1"/>
    <property type="molecule type" value="mRNA"/>
</dbReference>
<dbReference type="EMBL" id="BX538203">
    <property type="protein sequence ID" value="CAD98067.1"/>
    <property type="molecule type" value="mRNA"/>
</dbReference>
<dbReference type="EMBL" id="AK000537">
    <property type="protein sequence ID" value="BAA91238.1"/>
    <property type="status" value="ALT_INIT"/>
    <property type="molecule type" value="mRNA"/>
</dbReference>
<dbReference type="EMBL" id="AK001403">
    <property type="protein sequence ID" value="BAA91671.1"/>
    <property type="status" value="ALT_INIT"/>
    <property type="molecule type" value="mRNA"/>
</dbReference>
<dbReference type="EMBL" id="BK005731">
    <property type="protein sequence ID" value="DAA05731.1"/>
    <property type="molecule type" value="mRNA"/>
</dbReference>
<dbReference type="CCDS" id="CCDS34925.1">
    <molecule id="Q75QN2-1"/>
</dbReference>
<dbReference type="RefSeq" id="NP_060334.2">
    <molecule id="Q75QN2-1"/>
    <property type="nucleotide sequence ID" value="NM_017864.4"/>
</dbReference>
<dbReference type="RefSeq" id="XP_016869108.1">
    <property type="nucleotide sequence ID" value="XM_017013619.1"/>
</dbReference>
<dbReference type="PDB" id="7CUN">
    <property type="method" value="EM"/>
    <property type="resolution" value="3.50 A"/>
    <property type="chains" value="H=1-995"/>
</dbReference>
<dbReference type="PDB" id="7PKS">
    <property type="method" value="EM"/>
    <property type="resolution" value="3.60 A"/>
    <property type="chains" value="h=1-995"/>
</dbReference>
<dbReference type="PDB" id="7YCX">
    <property type="method" value="EM"/>
    <property type="resolution" value="4.18 A"/>
    <property type="chains" value="H=1-995"/>
</dbReference>
<dbReference type="PDB" id="8RBX">
    <property type="method" value="EM"/>
    <property type="resolution" value="4.10 A"/>
    <property type="chains" value="h=1-995"/>
</dbReference>
<dbReference type="PDB" id="8RBZ">
    <property type="method" value="EM"/>
    <property type="resolution" value="3.70 A"/>
    <property type="chains" value="h=1-995"/>
</dbReference>
<dbReference type="PDB" id="8RC4">
    <property type="method" value="EM"/>
    <property type="resolution" value="3.10 A"/>
    <property type="chains" value="h=1-995"/>
</dbReference>
<dbReference type="PDB" id="8YJB">
    <property type="method" value="EM"/>
    <property type="resolution" value="4.10 A"/>
    <property type="chains" value="H=1-995"/>
</dbReference>
<dbReference type="PDB" id="9EOF">
    <property type="method" value="EM"/>
    <property type="resolution" value="7.70 A"/>
    <property type="chains" value="F=1-995"/>
</dbReference>
<dbReference type="PDB" id="9EP4">
    <property type="method" value="EM"/>
    <property type="resolution" value="3.20 A"/>
    <property type="chains" value="A=1-995"/>
</dbReference>
<dbReference type="PDBsum" id="7CUN"/>
<dbReference type="PDBsum" id="7PKS"/>
<dbReference type="PDBsum" id="7YCX"/>
<dbReference type="PDBsum" id="8RBX"/>
<dbReference type="PDBsum" id="8RBZ"/>
<dbReference type="PDBsum" id="8RC4"/>
<dbReference type="PDBsum" id="8YJB"/>
<dbReference type="PDBsum" id="9EOF"/>
<dbReference type="PDBsum" id="9EP4"/>
<dbReference type="EMDB" id="EMD-13479"/>
<dbReference type="EMDB" id="EMD-19038"/>
<dbReference type="EMDB" id="EMD-19040"/>
<dbReference type="EMDB" id="EMD-19047"/>
<dbReference type="EMDB" id="EMD-19853"/>
<dbReference type="EMDB" id="EMD-19872"/>
<dbReference type="EMDB" id="EMD-30473"/>
<dbReference type="EMDB" id="EMD-33741"/>
<dbReference type="EMDB" id="EMD-39338"/>
<dbReference type="SMR" id="Q75QN2"/>
<dbReference type="BioGRID" id="120788">
    <property type="interactions" value="69"/>
</dbReference>
<dbReference type="ComplexPortal" id="CPX-6441">
    <property type="entry name" value="Integrator complex"/>
</dbReference>
<dbReference type="CORUM" id="Q75QN2"/>
<dbReference type="FunCoup" id="Q75QN2">
    <property type="interactions" value="4377"/>
</dbReference>
<dbReference type="IntAct" id="Q75QN2">
    <property type="interactions" value="48"/>
</dbReference>
<dbReference type="MINT" id="Q75QN2"/>
<dbReference type="STRING" id="9606.ENSP00000430338"/>
<dbReference type="iPTMnet" id="Q75QN2"/>
<dbReference type="PhosphoSitePlus" id="Q75QN2"/>
<dbReference type="BioMuta" id="INTS8"/>
<dbReference type="DMDM" id="74712892"/>
<dbReference type="jPOST" id="Q75QN2"/>
<dbReference type="MassIVE" id="Q75QN2"/>
<dbReference type="PaxDb" id="9606-ENSP00000430338"/>
<dbReference type="PeptideAtlas" id="Q75QN2"/>
<dbReference type="ProteomicsDB" id="68647">
    <molecule id="Q75QN2-1"/>
</dbReference>
<dbReference type="ProteomicsDB" id="68648">
    <molecule id="Q75QN2-2"/>
</dbReference>
<dbReference type="Pumba" id="Q75QN2"/>
<dbReference type="Antibodypedia" id="25892">
    <property type="antibodies" value="45 antibodies from 18 providers"/>
</dbReference>
<dbReference type="DNASU" id="55656"/>
<dbReference type="Ensembl" id="ENST00000523731.6">
    <molecule id="Q75QN2-1"/>
    <property type="protein sequence ID" value="ENSP00000430338.1"/>
    <property type="gene ID" value="ENSG00000164941.15"/>
</dbReference>
<dbReference type="GeneID" id="55656"/>
<dbReference type="KEGG" id="hsa:55656"/>
<dbReference type="MANE-Select" id="ENST00000523731.6">
    <property type="protein sequence ID" value="ENSP00000430338.1"/>
    <property type="RefSeq nucleotide sequence ID" value="NM_017864.4"/>
    <property type="RefSeq protein sequence ID" value="NP_060334.2"/>
</dbReference>
<dbReference type="UCSC" id="uc003yhb.5">
    <molecule id="Q75QN2-1"/>
    <property type="organism name" value="human"/>
</dbReference>
<dbReference type="AGR" id="HGNC:26048"/>
<dbReference type="CTD" id="55656"/>
<dbReference type="DisGeNET" id="55656"/>
<dbReference type="GeneCards" id="INTS8"/>
<dbReference type="HGNC" id="HGNC:26048">
    <property type="gene designation" value="INTS8"/>
</dbReference>
<dbReference type="HPA" id="ENSG00000164941">
    <property type="expression patterns" value="Low tissue specificity"/>
</dbReference>
<dbReference type="MalaCards" id="INTS8"/>
<dbReference type="MIM" id="611351">
    <property type="type" value="gene"/>
</dbReference>
<dbReference type="MIM" id="618572">
    <property type="type" value="phenotype"/>
</dbReference>
<dbReference type="neXtProt" id="NX_Q75QN2"/>
<dbReference type="OpenTargets" id="ENSG00000164941"/>
<dbReference type="PharmGKB" id="PA142672371"/>
<dbReference type="VEuPathDB" id="HostDB:ENSG00000164941"/>
<dbReference type="eggNOG" id="ENOG502QQS8">
    <property type="taxonomic scope" value="Eukaryota"/>
</dbReference>
<dbReference type="GeneTree" id="ENSGT00390000007597"/>
<dbReference type="HOGENOM" id="CLU_012129_0_0_1"/>
<dbReference type="InParanoid" id="Q75QN2"/>
<dbReference type="OMA" id="ASLSDWM"/>
<dbReference type="OrthoDB" id="64340at2759"/>
<dbReference type="PAN-GO" id="Q75QN2">
    <property type="GO annotations" value="2 GO annotations based on evolutionary models"/>
</dbReference>
<dbReference type="PhylomeDB" id="Q75QN2"/>
<dbReference type="TreeFam" id="TF324241"/>
<dbReference type="PathwayCommons" id="Q75QN2"/>
<dbReference type="Reactome" id="R-HSA-6807505">
    <property type="pathway name" value="RNA polymerase II transcribes snRNA genes"/>
</dbReference>
<dbReference type="SignaLink" id="Q75QN2"/>
<dbReference type="SIGNOR" id="Q75QN2"/>
<dbReference type="BioGRID-ORCS" id="55656">
    <property type="hits" value="719 hits in 1167 CRISPR screens"/>
</dbReference>
<dbReference type="ChiTaRS" id="INTS8">
    <property type="organism name" value="human"/>
</dbReference>
<dbReference type="GeneWiki" id="INTS8"/>
<dbReference type="GenomeRNAi" id="55656"/>
<dbReference type="Pharos" id="Q75QN2">
    <property type="development level" value="Tdark"/>
</dbReference>
<dbReference type="PRO" id="PR:Q75QN2"/>
<dbReference type="Proteomes" id="UP000005640">
    <property type="component" value="Chromosome 8"/>
</dbReference>
<dbReference type="RNAct" id="Q75QN2">
    <property type="molecule type" value="protein"/>
</dbReference>
<dbReference type="Bgee" id="ENSG00000164941">
    <property type="expression patterns" value="Expressed in secondary oocyte and 200 other cell types or tissues"/>
</dbReference>
<dbReference type="ExpressionAtlas" id="Q75QN2">
    <property type="expression patterns" value="baseline and differential"/>
</dbReference>
<dbReference type="GO" id="GO:0000785">
    <property type="term" value="C:chromatin"/>
    <property type="evidence" value="ECO:0000314"/>
    <property type="project" value="UniProtKB"/>
</dbReference>
<dbReference type="GO" id="GO:0160232">
    <property type="term" value="C:INTAC complex"/>
    <property type="evidence" value="ECO:0000314"/>
    <property type="project" value="UniProtKB"/>
</dbReference>
<dbReference type="GO" id="GO:0032039">
    <property type="term" value="C:integrator complex"/>
    <property type="evidence" value="ECO:0000314"/>
    <property type="project" value="UniProtKB"/>
</dbReference>
<dbReference type="GO" id="GO:0005654">
    <property type="term" value="C:nucleoplasm"/>
    <property type="evidence" value="ECO:0000304"/>
    <property type="project" value="Reactome"/>
</dbReference>
<dbReference type="GO" id="GO:0005634">
    <property type="term" value="C:nucleus"/>
    <property type="evidence" value="ECO:0000314"/>
    <property type="project" value="UniProtKB"/>
</dbReference>
<dbReference type="GO" id="GO:0071168">
    <property type="term" value="P:protein localization to chromatin"/>
    <property type="evidence" value="ECO:0000314"/>
    <property type="project" value="UniProtKB"/>
</dbReference>
<dbReference type="GO" id="GO:0034243">
    <property type="term" value="P:regulation of transcription elongation by RNA polymerase II"/>
    <property type="evidence" value="ECO:0000303"/>
    <property type="project" value="ComplexPortal"/>
</dbReference>
<dbReference type="GO" id="GO:0160240">
    <property type="term" value="P:RNA polymerase II transcription initiation surveillance"/>
    <property type="evidence" value="ECO:0000314"/>
    <property type="project" value="UniProtKB"/>
</dbReference>
<dbReference type="GO" id="GO:0034472">
    <property type="term" value="P:snRNA 3'-end processing"/>
    <property type="evidence" value="ECO:0000318"/>
    <property type="project" value="GO_Central"/>
</dbReference>
<dbReference type="GO" id="GO:0016180">
    <property type="term" value="P:snRNA processing"/>
    <property type="evidence" value="ECO:0000314"/>
    <property type="project" value="HGNC-UCL"/>
</dbReference>
<dbReference type="InterPro" id="IPR038751">
    <property type="entry name" value="Int8"/>
</dbReference>
<dbReference type="InterPro" id="IPR011990">
    <property type="entry name" value="TPR-like_helical_dom_sf"/>
</dbReference>
<dbReference type="PANTHER" id="PTHR13350">
    <property type="entry name" value="INTEGRATOR COMPLEX SUBUNIT 8"/>
    <property type="match status" value="1"/>
</dbReference>
<dbReference type="PANTHER" id="PTHR13350:SF1">
    <property type="entry name" value="INTEGRATOR COMPLEX SUBUNIT 8"/>
    <property type="match status" value="1"/>
</dbReference>
<dbReference type="SUPFAM" id="SSF48452">
    <property type="entry name" value="TPR-like"/>
    <property type="match status" value="1"/>
</dbReference>